<dbReference type="EMBL" id="AE010299">
    <property type="protein sequence ID" value="AAM04935.1"/>
    <property type="molecule type" value="Genomic_DNA"/>
</dbReference>
<dbReference type="RefSeq" id="WP_011021535.1">
    <property type="nucleotide sequence ID" value="NC_003552.1"/>
</dbReference>
<dbReference type="SMR" id="Q8TQL9"/>
<dbReference type="FunCoup" id="Q8TQL9">
    <property type="interactions" value="160"/>
</dbReference>
<dbReference type="STRING" id="188937.MA_1521"/>
<dbReference type="EnsemblBacteria" id="AAM04935">
    <property type="protein sequence ID" value="AAM04935"/>
    <property type="gene ID" value="MA_1521"/>
</dbReference>
<dbReference type="GeneID" id="1473409"/>
<dbReference type="KEGG" id="mac:MA_1521"/>
<dbReference type="HOGENOM" id="CLU_084513_4_0_2"/>
<dbReference type="InParanoid" id="Q8TQL9"/>
<dbReference type="OrthoDB" id="25810at2157"/>
<dbReference type="PhylomeDB" id="Q8TQL9"/>
<dbReference type="Proteomes" id="UP000002487">
    <property type="component" value="Chromosome"/>
</dbReference>
<dbReference type="GO" id="GO:0005737">
    <property type="term" value="C:cytoplasm"/>
    <property type="evidence" value="ECO:0007669"/>
    <property type="project" value="UniProtKB-SubCell"/>
</dbReference>
<dbReference type="GO" id="GO:1990904">
    <property type="term" value="C:ribonucleoprotein complex"/>
    <property type="evidence" value="ECO:0007669"/>
    <property type="project" value="UniProtKB-KW"/>
</dbReference>
<dbReference type="GO" id="GO:0005840">
    <property type="term" value="C:ribosome"/>
    <property type="evidence" value="ECO:0007669"/>
    <property type="project" value="UniProtKB-KW"/>
</dbReference>
<dbReference type="GO" id="GO:0004526">
    <property type="term" value="F:ribonuclease P activity"/>
    <property type="evidence" value="ECO:0007669"/>
    <property type="project" value="UniProtKB-UniRule"/>
</dbReference>
<dbReference type="GO" id="GO:0019843">
    <property type="term" value="F:rRNA binding"/>
    <property type="evidence" value="ECO:0007669"/>
    <property type="project" value="UniProtKB-KW"/>
</dbReference>
<dbReference type="GO" id="GO:0003735">
    <property type="term" value="F:structural constituent of ribosome"/>
    <property type="evidence" value="ECO:0007669"/>
    <property type="project" value="InterPro"/>
</dbReference>
<dbReference type="GO" id="GO:0042254">
    <property type="term" value="P:ribosome biogenesis"/>
    <property type="evidence" value="ECO:0007669"/>
    <property type="project" value="InterPro"/>
</dbReference>
<dbReference type="GO" id="GO:0006412">
    <property type="term" value="P:translation"/>
    <property type="evidence" value="ECO:0007669"/>
    <property type="project" value="UniProtKB-UniRule"/>
</dbReference>
<dbReference type="GO" id="GO:0001682">
    <property type="term" value="P:tRNA 5'-leader removal"/>
    <property type="evidence" value="ECO:0007669"/>
    <property type="project" value="UniProtKB-UniRule"/>
</dbReference>
<dbReference type="FunFam" id="3.30.1330.30:FF:000020">
    <property type="entry name" value="50S ribosomal protein L7Ae"/>
    <property type="match status" value="1"/>
</dbReference>
<dbReference type="Gene3D" id="3.30.1330.30">
    <property type="match status" value="1"/>
</dbReference>
<dbReference type="HAMAP" id="MF_00326">
    <property type="entry name" value="Ribosomal_eL8"/>
    <property type="match status" value="1"/>
</dbReference>
<dbReference type="InterPro" id="IPR029064">
    <property type="entry name" value="Ribosomal_eL30-like_sf"/>
</dbReference>
<dbReference type="InterPro" id="IPR004037">
    <property type="entry name" value="Ribosomal_eL8-like_CS"/>
</dbReference>
<dbReference type="InterPro" id="IPR004038">
    <property type="entry name" value="Ribosomal_eL8/eL30/eS12/Gad45"/>
</dbReference>
<dbReference type="InterPro" id="IPR018492">
    <property type="entry name" value="Ribosomal_eL8/Nhp2"/>
</dbReference>
<dbReference type="InterPro" id="IPR022481">
    <property type="entry name" value="Ribosomal_eL8_arc"/>
</dbReference>
<dbReference type="NCBIfam" id="TIGR03677">
    <property type="entry name" value="eL8_ribo"/>
    <property type="match status" value="1"/>
</dbReference>
<dbReference type="Pfam" id="PF01248">
    <property type="entry name" value="Ribosomal_L7Ae"/>
    <property type="match status" value="1"/>
</dbReference>
<dbReference type="PRINTS" id="PR00881">
    <property type="entry name" value="L7ARS6FAMILY"/>
</dbReference>
<dbReference type="PRINTS" id="PR00884">
    <property type="entry name" value="RIBOSOMALHS6"/>
</dbReference>
<dbReference type="SUPFAM" id="SSF55315">
    <property type="entry name" value="L30e-like"/>
    <property type="match status" value="1"/>
</dbReference>
<dbReference type="PROSITE" id="PS01082">
    <property type="entry name" value="RIBOSOMAL_L7AE"/>
    <property type="match status" value="1"/>
</dbReference>
<organism>
    <name type="scientific">Methanosarcina acetivorans (strain ATCC 35395 / DSM 2834 / JCM 12185 / C2A)</name>
    <dbReference type="NCBI Taxonomy" id="188937"/>
    <lineage>
        <taxon>Archaea</taxon>
        <taxon>Methanobacteriati</taxon>
        <taxon>Methanobacteriota</taxon>
        <taxon>Stenosarchaea group</taxon>
        <taxon>Methanomicrobia</taxon>
        <taxon>Methanosarcinales</taxon>
        <taxon>Methanosarcinaceae</taxon>
        <taxon>Methanosarcina</taxon>
    </lineage>
</organism>
<accession>Q8TQL9</accession>
<keyword id="KW-0963">Cytoplasm</keyword>
<keyword id="KW-1185">Reference proteome</keyword>
<keyword id="KW-0687">Ribonucleoprotein</keyword>
<keyword id="KW-0689">Ribosomal protein</keyword>
<keyword id="KW-0694">RNA-binding</keyword>
<keyword id="KW-0699">rRNA-binding</keyword>
<keyword id="KW-0819">tRNA processing</keyword>
<proteinExistence type="inferred from homology"/>
<feature type="chain" id="PRO_0000136792" description="Large ribosomal subunit protein eL8">
    <location>
        <begin position="1"/>
        <end position="120"/>
    </location>
</feature>
<reference key="1">
    <citation type="journal article" date="2002" name="Genome Res.">
        <title>The genome of Methanosarcina acetivorans reveals extensive metabolic and physiological diversity.</title>
        <authorList>
            <person name="Galagan J.E."/>
            <person name="Nusbaum C."/>
            <person name="Roy A."/>
            <person name="Endrizzi M.G."/>
            <person name="Macdonald P."/>
            <person name="FitzHugh W."/>
            <person name="Calvo S."/>
            <person name="Engels R."/>
            <person name="Smirnov S."/>
            <person name="Atnoor D."/>
            <person name="Brown A."/>
            <person name="Allen N."/>
            <person name="Naylor J."/>
            <person name="Stange-Thomann N."/>
            <person name="DeArellano K."/>
            <person name="Johnson R."/>
            <person name="Linton L."/>
            <person name="McEwan P."/>
            <person name="McKernan K."/>
            <person name="Talamas J."/>
            <person name="Tirrell A."/>
            <person name="Ye W."/>
            <person name="Zimmer A."/>
            <person name="Barber R.D."/>
            <person name="Cann I."/>
            <person name="Graham D.E."/>
            <person name="Grahame D.A."/>
            <person name="Guss A.M."/>
            <person name="Hedderich R."/>
            <person name="Ingram-Smith C."/>
            <person name="Kuettner H.C."/>
            <person name="Krzycki J.A."/>
            <person name="Leigh J.A."/>
            <person name="Li W."/>
            <person name="Liu J."/>
            <person name="Mukhopadhyay B."/>
            <person name="Reeve J.N."/>
            <person name="Smith K."/>
            <person name="Springer T.A."/>
            <person name="Umayam L.A."/>
            <person name="White O."/>
            <person name="White R.H."/>
            <person name="de Macario E.C."/>
            <person name="Ferry J.G."/>
            <person name="Jarrell K.F."/>
            <person name="Jing H."/>
            <person name="Macario A.J.L."/>
            <person name="Paulsen I.T."/>
            <person name="Pritchett M."/>
            <person name="Sowers K.R."/>
            <person name="Swanson R.V."/>
            <person name="Zinder S.H."/>
            <person name="Lander E."/>
            <person name="Metcalf W.W."/>
            <person name="Birren B."/>
        </authorList>
    </citation>
    <scope>NUCLEOTIDE SEQUENCE [LARGE SCALE GENOMIC DNA]</scope>
    <source>
        <strain>ATCC 35395 / DSM 2834 / JCM 12185 / C2A</strain>
    </source>
</reference>
<evidence type="ECO:0000255" key="1">
    <source>
        <dbReference type="HAMAP-Rule" id="MF_00326"/>
    </source>
</evidence>
<evidence type="ECO:0000305" key="2"/>
<name>RL7A_METAC</name>
<comment type="function">
    <text evidence="1">Multifunctional RNA-binding protein that recognizes the K-turn motif in ribosomal RNA, the RNA component of RNase P, box H/ACA, box C/D and box C'/D' sRNAs.</text>
</comment>
<comment type="subunit">
    <text evidence="1">Part of the 50S ribosomal subunit. Probably part of the RNase P complex.</text>
</comment>
<comment type="subcellular location">
    <subcellularLocation>
        <location evidence="1">Cytoplasm</location>
    </subcellularLocation>
</comment>
<comment type="similarity">
    <text evidence="1">Belongs to the eukaryotic ribosomal protein eL8 family.</text>
</comment>
<protein>
    <recommendedName>
        <fullName evidence="1">Large ribosomal subunit protein eL8</fullName>
    </recommendedName>
    <alternativeName>
        <fullName evidence="2">50S ribosomal protein L7Ae</fullName>
    </alternativeName>
    <alternativeName>
        <fullName evidence="1">Ribosomal protein L8e</fullName>
    </alternativeName>
</protein>
<sequence length="120" mass="12725">MAQLAKFDVPEELTNKALEALELARDTGKIKKGTNEATKAIERGNAKLVLIAEDIEPAEIVAHIGPLSEEKKAPYIFIKNQKELGAASGLGVSCATVAIVDAGKAAEMVQDIAQKLEALK</sequence>
<gene>
    <name evidence="1" type="primary">rpl7ae</name>
    <name type="ordered locus">MA_1521</name>
</gene>